<organism>
    <name type="scientific">Leuconostoc mesenteroides subsp. mesenteroides (strain ATCC 8293 / DSM 20343 / BCRC 11652 / CCM 1803 / JCM 6124 / NCDO 523 / NBRC 100496 / NCIMB 8023 / NCTC 12954 / NRRL B-1118 / 37Y)</name>
    <dbReference type="NCBI Taxonomy" id="203120"/>
    <lineage>
        <taxon>Bacteria</taxon>
        <taxon>Bacillati</taxon>
        <taxon>Bacillota</taxon>
        <taxon>Bacilli</taxon>
        <taxon>Lactobacillales</taxon>
        <taxon>Lactobacillaceae</taxon>
        <taxon>Leuconostoc</taxon>
    </lineage>
</organism>
<evidence type="ECO:0000255" key="1">
    <source>
        <dbReference type="HAMAP-Rule" id="MF_00110"/>
    </source>
</evidence>
<accession>Q03X08</accession>
<gene>
    <name evidence="1" type="primary">aroB</name>
    <name type="ordered locus">LEUM_1166</name>
</gene>
<dbReference type="EC" id="4.2.3.4" evidence="1"/>
<dbReference type="EMBL" id="CP000414">
    <property type="protein sequence ID" value="ABJ62264.1"/>
    <property type="molecule type" value="Genomic_DNA"/>
</dbReference>
<dbReference type="RefSeq" id="WP_011679900.1">
    <property type="nucleotide sequence ID" value="NC_008531.1"/>
</dbReference>
<dbReference type="SMR" id="Q03X08"/>
<dbReference type="EnsemblBacteria" id="ABJ62264">
    <property type="protein sequence ID" value="ABJ62264"/>
    <property type="gene ID" value="LEUM_1166"/>
</dbReference>
<dbReference type="GeneID" id="29577396"/>
<dbReference type="KEGG" id="lme:LEUM_1166"/>
<dbReference type="eggNOG" id="COG0337">
    <property type="taxonomic scope" value="Bacteria"/>
</dbReference>
<dbReference type="HOGENOM" id="CLU_001201_0_1_9"/>
<dbReference type="UniPathway" id="UPA00053">
    <property type="reaction ID" value="UER00085"/>
</dbReference>
<dbReference type="Proteomes" id="UP000000362">
    <property type="component" value="Chromosome"/>
</dbReference>
<dbReference type="GO" id="GO:0005737">
    <property type="term" value="C:cytoplasm"/>
    <property type="evidence" value="ECO:0007669"/>
    <property type="project" value="UniProtKB-SubCell"/>
</dbReference>
<dbReference type="GO" id="GO:0003856">
    <property type="term" value="F:3-dehydroquinate synthase activity"/>
    <property type="evidence" value="ECO:0007669"/>
    <property type="project" value="UniProtKB-UniRule"/>
</dbReference>
<dbReference type="GO" id="GO:0046872">
    <property type="term" value="F:metal ion binding"/>
    <property type="evidence" value="ECO:0007669"/>
    <property type="project" value="UniProtKB-KW"/>
</dbReference>
<dbReference type="GO" id="GO:0000166">
    <property type="term" value="F:nucleotide binding"/>
    <property type="evidence" value="ECO:0007669"/>
    <property type="project" value="UniProtKB-KW"/>
</dbReference>
<dbReference type="GO" id="GO:0008652">
    <property type="term" value="P:amino acid biosynthetic process"/>
    <property type="evidence" value="ECO:0007669"/>
    <property type="project" value="UniProtKB-KW"/>
</dbReference>
<dbReference type="GO" id="GO:0009073">
    <property type="term" value="P:aromatic amino acid family biosynthetic process"/>
    <property type="evidence" value="ECO:0007669"/>
    <property type="project" value="UniProtKB-KW"/>
</dbReference>
<dbReference type="GO" id="GO:0009423">
    <property type="term" value="P:chorismate biosynthetic process"/>
    <property type="evidence" value="ECO:0007669"/>
    <property type="project" value="UniProtKB-UniRule"/>
</dbReference>
<dbReference type="CDD" id="cd08195">
    <property type="entry name" value="DHQS"/>
    <property type="match status" value="1"/>
</dbReference>
<dbReference type="FunFam" id="3.40.50.1970:FF:000007">
    <property type="entry name" value="Pentafunctional AROM polypeptide"/>
    <property type="match status" value="1"/>
</dbReference>
<dbReference type="Gene3D" id="3.40.50.1970">
    <property type="match status" value="1"/>
</dbReference>
<dbReference type="Gene3D" id="1.20.1090.10">
    <property type="entry name" value="Dehydroquinate synthase-like - alpha domain"/>
    <property type="match status" value="1"/>
</dbReference>
<dbReference type="HAMAP" id="MF_00110">
    <property type="entry name" value="DHQ_synthase"/>
    <property type="match status" value="1"/>
</dbReference>
<dbReference type="InterPro" id="IPR050071">
    <property type="entry name" value="Dehydroquinate_synthase"/>
</dbReference>
<dbReference type="InterPro" id="IPR016037">
    <property type="entry name" value="DHQ_synth_AroB"/>
</dbReference>
<dbReference type="InterPro" id="IPR030963">
    <property type="entry name" value="DHQ_synth_fam"/>
</dbReference>
<dbReference type="InterPro" id="IPR030960">
    <property type="entry name" value="DHQS/DOIS_N"/>
</dbReference>
<dbReference type="InterPro" id="IPR056179">
    <property type="entry name" value="DHQS_C"/>
</dbReference>
<dbReference type="NCBIfam" id="TIGR01357">
    <property type="entry name" value="aroB"/>
    <property type="match status" value="1"/>
</dbReference>
<dbReference type="PANTHER" id="PTHR43622">
    <property type="entry name" value="3-DEHYDROQUINATE SYNTHASE"/>
    <property type="match status" value="1"/>
</dbReference>
<dbReference type="PANTHER" id="PTHR43622:SF7">
    <property type="entry name" value="3-DEHYDROQUINATE SYNTHASE, CHLOROPLASTIC"/>
    <property type="match status" value="1"/>
</dbReference>
<dbReference type="Pfam" id="PF01761">
    <property type="entry name" value="DHQ_synthase"/>
    <property type="match status" value="1"/>
</dbReference>
<dbReference type="Pfam" id="PF24621">
    <property type="entry name" value="DHQS_C"/>
    <property type="match status" value="1"/>
</dbReference>
<dbReference type="PIRSF" id="PIRSF001455">
    <property type="entry name" value="DHQ_synth"/>
    <property type="match status" value="1"/>
</dbReference>
<dbReference type="SUPFAM" id="SSF56796">
    <property type="entry name" value="Dehydroquinate synthase-like"/>
    <property type="match status" value="1"/>
</dbReference>
<comment type="function">
    <text evidence="1">Catalyzes the conversion of 3-deoxy-D-arabino-heptulosonate 7-phosphate (DAHP) to dehydroquinate (DHQ).</text>
</comment>
<comment type="catalytic activity">
    <reaction evidence="1">
        <text>7-phospho-2-dehydro-3-deoxy-D-arabino-heptonate = 3-dehydroquinate + phosphate</text>
        <dbReference type="Rhea" id="RHEA:21968"/>
        <dbReference type="ChEBI" id="CHEBI:32364"/>
        <dbReference type="ChEBI" id="CHEBI:43474"/>
        <dbReference type="ChEBI" id="CHEBI:58394"/>
        <dbReference type="EC" id="4.2.3.4"/>
    </reaction>
</comment>
<comment type="cofactor">
    <cofactor evidence="1">
        <name>Co(2+)</name>
        <dbReference type="ChEBI" id="CHEBI:48828"/>
    </cofactor>
    <cofactor evidence="1">
        <name>Zn(2+)</name>
        <dbReference type="ChEBI" id="CHEBI:29105"/>
    </cofactor>
    <text evidence="1">Binds 1 divalent metal cation per subunit. Can use either Co(2+) or Zn(2+).</text>
</comment>
<comment type="cofactor">
    <cofactor evidence="1">
        <name>NAD(+)</name>
        <dbReference type="ChEBI" id="CHEBI:57540"/>
    </cofactor>
</comment>
<comment type="pathway">
    <text evidence="1">Metabolic intermediate biosynthesis; chorismate biosynthesis; chorismate from D-erythrose 4-phosphate and phosphoenolpyruvate: step 2/7.</text>
</comment>
<comment type="subcellular location">
    <subcellularLocation>
        <location evidence="1">Cytoplasm</location>
    </subcellularLocation>
</comment>
<comment type="similarity">
    <text evidence="1">Belongs to the sugar phosphate cyclases superfamily. Dehydroquinate synthase family.</text>
</comment>
<proteinExistence type="inferred from homology"/>
<name>AROB_LEUMM</name>
<sequence length="354" mass="38101">MSTITVDLATKKYDVKIDNTLHTRLGQEISAVWSARKISLLTDSNVGPLYLKDTAKQLREVGFDILELEVPAGESSKSLSVAGELIAKMAAAGFTRGDGVIALGGGVIGDLGGVVASLYMRGIAFIQIATSLTAQVDSSVGGKTAVNLGNTKNIAGSFYQPDLDLVDVTYLNTLTDRDLVEGYAEVVKTSALANQDFFDFTGQIKSVADIRHHAQELSKRAIAYKASVVMADEKEAGDRQFLNFGHTFGHAIELLAHGELRHGEAVAIGMIAISSRFEQHGIMPRGLTTELLSRLEAVGLPTHSHFIGTTDFFNHLINDKKNHDGILNLVALEKVGQPIIVKKKIADMPAFVEN</sequence>
<keyword id="KW-0028">Amino-acid biosynthesis</keyword>
<keyword id="KW-0057">Aromatic amino acid biosynthesis</keyword>
<keyword id="KW-0170">Cobalt</keyword>
<keyword id="KW-0963">Cytoplasm</keyword>
<keyword id="KW-0456">Lyase</keyword>
<keyword id="KW-0479">Metal-binding</keyword>
<keyword id="KW-0520">NAD</keyword>
<keyword id="KW-0547">Nucleotide-binding</keyword>
<keyword id="KW-1185">Reference proteome</keyword>
<keyword id="KW-0862">Zinc</keyword>
<reference key="1">
    <citation type="journal article" date="2006" name="Proc. Natl. Acad. Sci. U.S.A.">
        <title>Comparative genomics of the lactic acid bacteria.</title>
        <authorList>
            <person name="Makarova K.S."/>
            <person name="Slesarev A."/>
            <person name="Wolf Y.I."/>
            <person name="Sorokin A."/>
            <person name="Mirkin B."/>
            <person name="Koonin E.V."/>
            <person name="Pavlov A."/>
            <person name="Pavlova N."/>
            <person name="Karamychev V."/>
            <person name="Polouchine N."/>
            <person name="Shakhova V."/>
            <person name="Grigoriev I."/>
            <person name="Lou Y."/>
            <person name="Rohksar D."/>
            <person name="Lucas S."/>
            <person name="Huang K."/>
            <person name="Goodstein D.M."/>
            <person name="Hawkins T."/>
            <person name="Plengvidhya V."/>
            <person name="Welker D."/>
            <person name="Hughes J."/>
            <person name="Goh Y."/>
            <person name="Benson A."/>
            <person name="Baldwin K."/>
            <person name="Lee J.-H."/>
            <person name="Diaz-Muniz I."/>
            <person name="Dosti B."/>
            <person name="Smeianov V."/>
            <person name="Wechter W."/>
            <person name="Barabote R."/>
            <person name="Lorca G."/>
            <person name="Altermann E."/>
            <person name="Barrangou R."/>
            <person name="Ganesan B."/>
            <person name="Xie Y."/>
            <person name="Rawsthorne H."/>
            <person name="Tamir D."/>
            <person name="Parker C."/>
            <person name="Breidt F."/>
            <person name="Broadbent J.R."/>
            <person name="Hutkins R."/>
            <person name="O'Sullivan D."/>
            <person name="Steele J."/>
            <person name="Unlu G."/>
            <person name="Saier M.H. Jr."/>
            <person name="Klaenhammer T."/>
            <person name="Richardson P."/>
            <person name="Kozyavkin S."/>
            <person name="Weimer B.C."/>
            <person name="Mills D.A."/>
        </authorList>
    </citation>
    <scope>NUCLEOTIDE SEQUENCE [LARGE SCALE GENOMIC DNA]</scope>
    <source>
        <strain>ATCC 8293 / DSM 20343 / BCRC 11652 / CCM 1803 / JCM 6124 / NCDO 523 / NBRC 100496 / NCIMB 8023 / NCTC 12954 / NRRL B-1118 / 37Y</strain>
    </source>
</reference>
<protein>
    <recommendedName>
        <fullName evidence="1">3-dehydroquinate synthase</fullName>
        <shortName evidence="1">DHQS</shortName>
        <ecNumber evidence="1">4.2.3.4</ecNumber>
    </recommendedName>
</protein>
<feature type="chain" id="PRO_1000094542" description="3-dehydroquinate synthase">
    <location>
        <begin position="1"/>
        <end position="354"/>
    </location>
</feature>
<feature type="binding site" evidence="1">
    <location>
        <begin position="106"/>
        <end position="110"/>
    </location>
    <ligand>
        <name>NAD(+)</name>
        <dbReference type="ChEBI" id="CHEBI:57540"/>
    </ligand>
</feature>
<feature type="binding site" evidence="1">
    <location>
        <begin position="130"/>
        <end position="131"/>
    </location>
    <ligand>
        <name>NAD(+)</name>
        <dbReference type="ChEBI" id="CHEBI:57540"/>
    </ligand>
</feature>
<feature type="binding site" evidence="1">
    <location>
        <position position="143"/>
    </location>
    <ligand>
        <name>NAD(+)</name>
        <dbReference type="ChEBI" id="CHEBI:57540"/>
    </ligand>
</feature>
<feature type="binding site" evidence="1">
    <location>
        <position position="152"/>
    </location>
    <ligand>
        <name>NAD(+)</name>
        <dbReference type="ChEBI" id="CHEBI:57540"/>
    </ligand>
</feature>
<feature type="binding site" evidence="1">
    <location>
        <position position="185"/>
    </location>
    <ligand>
        <name>Zn(2+)</name>
        <dbReference type="ChEBI" id="CHEBI:29105"/>
    </ligand>
</feature>
<feature type="binding site" evidence="1">
    <location>
        <position position="246"/>
    </location>
    <ligand>
        <name>Zn(2+)</name>
        <dbReference type="ChEBI" id="CHEBI:29105"/>
    </ligand>
</feature>
<feature type="binding site" evidence="1">
    <location>
        <position position="262"/>
    </location>
    <ligand>
        <name>Zn(2+)</name>
        <dbReference type="ChEBI" id="CHEBI:29105"/>
    </ligand>
</feature>